<evidence type="ECO:0000255" key="1">
    <source>
        <dbReference type="HAMAP-Rule" id="MF_01649"/>
    </source>
</evidence>
<sequence length="172" mass="20606">MSAQVSLELHHRISQFLFHEASLLDDWKFRDWLAQLDEEIRYTMRTTVNAQTRDRRKGIQPPTTWIFNDTKDQLERRIARLETGMAWAEEPPSRTRHLISNCQVNETDIPNVFAVRVNYLLYRAQKERDETFYVGTRFDKVRRLEDDNWRLLERDIVLDQAVITSHNLSVLF</sequence>
<reference key="1">
    <citation type="journal article" date="2009" name="PLoS Genet.">
        <title>Organised genome dynamics in the Escherichia coli species results in highly diverse adaptive paths.</title>
        <authorList>
            <person name="Touchon M."/>
            <person name="Hoede C."/>
            <person name="Tenaillon O."/>
            <person name="Barbe V."/>
            <person name="Baeriswyl S."/>
            <person name="Bidet P."/>
            <person name="Bingen E."/>
            <person name="Bonacorsi S."/>
            <person name="Bouchier C."/>
            <person name="Bouvet O."/>
            <person name="Calteau A."/>
            <person name="Chiapello H."/>
            <person name="Clermont O."/>
            <person name="Cruveiller S."/>
            <person name="Danchin A."/>
            <person name="Diard M."/>
            <person name="Dossat C."/>
            <person name="Karoui M.E."/>
            <person name="Frapy E."/>
            <person name="Garry L."/>
            <person name="Ghigo J.M."/>
            <person name="Gilles A.M."/>
            <person name="Johnson J."/>
            <person name="Le Bouguenec C."/>
            <person name="Lescat M."/>
            <person name="Mangenot S."/>
            <person name="Martinez-Jehanne V."/>
            <person name="Matic I."/>
            <person name="Nassif X."/>
            <person name="Oztas S."/>
            <person name="Petit M.A."/>
            <person name="Pichon C."/>
            <person name="Rouy Z."/>
            <person name="Ruf C.S."/>
            <person name="Schneider D."/>
            <person name="Tourret J."/>
            <person name="Vacherie B."/>
            <person name="Vallenet D."/>
            <person name="Medigue C."/>
            <person name="Rocha E.P.C."/>
            <person name="Denamur E."/>
        </authorList>
    </citation>
    <scope>NUCLEOTIDE SEQUENCE [LARGE SCALE GENOMIC DNA]</scope>
    <source>
        <strain>UMN026 / ExPEC</strain>
    </source>
</reference>
<organism>
    <name type="scientific">Escherichia coli O17:K52:H18 (strain UMN026 / ExPEC)</name>
    <dbReference type="NCBI Taxonomy" id="585056"/>
    <lineage>
        <taxon>Bacteria</taxon>
        <taxon>Pseudomonadati</taxon>
        <taxon>Pseudomonadota</taxon>
        <taxon>Gammaproteobacteria</taxon>
        <taxon>Enterobacterales</taxon>
        <taxon>Enterobacteriaceae</taxon>
        <taxon>Escherichia</taxon>
    </lineage>
</organism>
<proteinExistence type="inferred from homology"/>
<protein>
    <recommendedName>
        <fullName evidence="1">3-phenylpropionate/cinnamic acid dioxygenase subunit beta</fullName>
        <ecNumber evidence="1">1.14.12.19</ecNumber>
    </recommendedName>
</protein>
<comment type="function">
    <text evidence="1">Part of the multicomponent 3-phenylpropionate dioxygenase. Converts 3-phenylpropionic acid (PP) and cinnamic acid (CI) into 3-phenylpropionate-dihydrodiol (PP-dihydrodiol) and cinnamic acid-dihydrodiol (CI-dihydrodiol), respectively.</text>
</comment>
<comment type="catalytic activity">
    <reaction evidence="1">
        <text>3-phenylpropanoate + NADH + O2 + H(+) = 3-(cis-5,6-dihydroxycyclohexa-1,3-dien-1-yl)propanoate + NAD(+)</text>
        <dbReference type="Rhea" id="RHEA:20357"/>
        <dbReference type="ChEBI" id="CHEBI:15378"/>
        <dbReference type="ChEBI" id="CHEBI:15379"/>
        <dbReference type="ChEBI" id="CHEBI:51057"/>
        <dbReference type="ChEBI" id="CHEBI:57540"/>
        <dbReference type="ChEBI" id="CHEBI:57945"/>
        <dbReference type="ChEBI" id="CHEBI:60087"/>
        <dbReference type="EC" id="1.14.12.19"/>
    </reaction>
</comment>
<comment type="catalytic activity">
    <reaction evidence="1">
        <text>(E)-cinnamate + NADH + O2 + H(+) = (2E)-3-(cis-5,6-dihydroxycyclohexa-1,3-dien-1-yl)prop-2-enoate + NAD(+)</text>
        <dbReference type="Rhea" id="RHEA:25058"/>
        <dbReference type="ChEBI" id="CHEBI:15378"/>
        <dbReference type="ChEBI" id="CHEBI:15379"/>
        <dbReference type="ChEBI" id="CHEBI:15669"/>
        <dbReference type="ChEBI" id="CHEBI:57540"/>
        <dbReference type="ChEBI" id="CHEBI:57945"/>
        <dbReference type="ChEBI" id="CHEBI:61451"/>
        <dbReference type="EC" id="1.14.12.19"/>
    </reaction>
</comment>
<comment type="pathway">
    <text evidence="1">Aromatic compound metabolism; 3-phenylpropanoate degradation.</text>
</comment>
<comment type="subunit">
    <text evidence="1">This dioxygenase system consists of four proteins: the two subunits of the hydroxylase component (HcaE and HcaF), a ferredoxin (HcaC) and a ferredoxin reductase (HcaD).</text>
</comment>
<comment type="similarity">
    <text evidence="1">Belongs to the bacterial ring-hydroxylating dioxygenase beta subunit family.</text>
</comment>
<keyword id="KW-0058">Aromatic hydrocarbons catabolism</keyword>
<keyword id="KW-0223">Dioxygenase</keyword>
<keyword id="KW-0520">NAD</keyword>
<keyword id="KW-0560">Oxidoreductase</keyword>
<dbReference type="EC" id="1.14.12.19" evidence="1"/>
<dbReference type="EMBL" id="CU928163">
    <property type="protein sequence ID" value="CAR14035.1"/>
    <property type="molecule type" value="Genomic_DNA"/>
</dbReference>
<dbReference type="RefSeq" id="WP_001276064.1">
    <property type="nucleotide sequence ID" value="NC_011751.1"/>
</dbReference>
<dbReference type="RefSeq" id="YP_002413561.1">
    <property type="nucleotide sequence ID" value="NC_011751.1"/>
</dbReference>
<dbReference type="SMR" id="B7N6C6"/>
<dbReference type="STRING" id="585056.ECUMN_2859"/>
<dbReference type="KEGG" id="eum:ECUMN_2859"/>
<dbReference type="PATRIC" id="fig|585056.7.peg.3046"/>
<dbReference type="HOGENOM" id="CLU_102527_1_1_6"/>
<dbReference type="UniPathway" id="UPA00714"/>
<dbReference type="Proteomes" id="UP000007097">
    <property type="component" value="Chromosome"/>
</dbReference>
<dbReference type="GO" id="GO:0008695">
    <property type="term" value="F:3-phenylpropionate dioxygenase activity"/>
    <property type="evidence" value="ECO:0007669"/>
    <property type="project" value="UniProtKB-UniRule"/>
</dbReference>
<dbReference type="GO" id="GO:0019380">
    <property type="term" value="P:3-phenylpropionate catabolic process"/>
    <property type="evidence" value="ECO:0007669"/>
    <property type="project" value="UniProtKB-UniRule"/>
</dbReference>
<dbReference type="CDD" id="cd00667">
    <property type="entry name" value="ring_hydroxylating_dioxygenases_beta"/>
    <property type="match status" value="1"/>
</dbReference>
<dbReference type="FunFam" id="3.10.450.50:FF:000008">
    <property type="entry name" value="3-phenylpropionate/cinnamic acid dioxygenase subunit beta"/>
    <property type="match status" value="1"/>
</dbReference>
<dbReference type="Gene3D" id="3.10.450.50">
    <property type="match status" value="1"/>
</dbReference>
<dbReference type="HAMAP" id="MF_01649">
    <property type="entry name" value="HcaF"/>
    <property type="match status" value="1"/>
</dbReference>
<dbReference type="InterPro" id="IPR054881">
    <property type="entry name" value="3PPDioc_HcaF"/>
</dbReference>
<dbReference type="InterPro" id="IPR023712">
    <property type="entry name" value="HcaF"/>
</dbReference>
<dbReference type="InterPro" id="IPR032710">
    <property type="entry name" value="NTF2-like_dom_sf"/>
</dbReference>
<dbReference type="InterPro" id="IPR000391">
    <property type="entry name" value="Rng_hydr_dOase-bsu"/>
</dbReference>
<dbReference type="NCBIfam" id="NF042947">
    <property type="entry name" value="3PPDioc_HcaF"/>
    <property type="match status" value="1"/>
</dbReference>
<dbReference type="NCBIfam" id="NF007479">
    <property type="entry name" value="PRK10069.1"/>
    <property type="match status" value="1"/>
</dbReference>
<dbReference type="PANTHER" id="PTHR41534:SF2">
    <property type="entry name" value="3-PHENYLPROPIONATE_CINNAMIC ACID DIOXYGENASE SUBUNIT BETA"/>
    <property type="match status" value="1"/>
</dbReference>
<dbReference type="PANTHER" id="PTHR41534">
    <property type="entry name" value="BLR3401 PROTEIN"/>
    <property type="match status" value="1"/>
</dbReference>
<dbReference type="Pfam" id="PF00866">
    <property type="entry name" value="Ring_hydroxyl_B"/>
    <property type="match status" value="1"/>
</dbReference>
<dbReference type="SUPFAM" id="SSF54427">
    <property type="entry name" value="NTF2-like"/>
    <property type="match status" value="1"/>
</dbReference>
<feature type="chain" id="PRO_1000186978" description="3-phenylpropionate/cinnamic acid dioxygenase subunit beta">
    <location>
        <begin position="1"/>
        <end position="172"/>
    </location>
</feature>
<gene>
    <name evidence="1" type="primary">hcaF</name>
    <name type="ordered locus">ECUMN_2859</name>
</gene>
<accession>B7N6C6</accession>
<name>HCAF_ECOLU</name>